<proteinExistence type="evidence at protein level"/>
<comment type="function">
    <molecule>Botulinum neurotoxin type D</molecule>
    <text evidence="1 6 10 11 13 14 19 22">Botulinum toxin causes flaccid paralysis by inhibiting neurotransmitter (acetylcholine) release from the presynaptic membranes of nerve terminals of the eukaryotic host skeletal and autonomic nervous system, with frequent heart or respiratory failure (PubMed:16252491, PubMed:8175689). Precursor of botulinum neurotoxin D for which a proteinaceous coreceptor is controversial. In double SV2A/SV2B knockout mice this toxin does not degrade its synaptobrevin target; introducing SV2A, SV2B or SV2C restores target cleavage (PubMed:21483489). Recognition of SV2 by this toxin does not occur via SV2 glycosylation or its large extracellular loop 4 (PubMed:21483489). Another group does not find a convincing interaction with SV2 (PubMed:21632541). Thus a protein receptor for this BoNT serotype has yet to be definitively proven. Recognizes at least 1 complex polysialylated ganglioside found on neural tissue. Electrical stimulation increases uptake of toxin in an ex vivo assay, presumably by transiently exposing a receptor usually found in eukaryotic target synaptic vesicles (PubMed:19650874, PubMed:21483489, PubMed:21632541). Upon synaptic vesicle recycling the toxin is taken up via the endocytic pathway; when the pH of the toxin-containing endosome drops a structural rearrangement occurs so that the N-terminus of the heavy chain (HC) forms pores that allows the light chain (LC) to translocate into the cytosol (By similarity). Once in the cytosol the disulfide bond linking the 2 subunits is reduced and LC cleaves its target protein on synaptic vesicles, preventing their fusion with the cytoplasmic membrane and thus neurotransmitter release (By similarity). Requires complex eukaryotic host polysialogangliosides for full neurotoxicity and for binding to neurons (PubMed:20704566, PubMed:21483489).</text>
</comment>
<comment type="function">
    <molecule>Botulinum neurotoxin D light chain</molecule>
    <text evidence="19 20 25">Has proteolytic activity (PubMed:8175689, PubMed:8197120). After translocation into the eukaryotic host cytosol, inhibits neurotransmitter release by acting as a zinc endopeptidase that cleaves the '61-Lys-|-Leu-62' bond of synaptobrevin-1 (VAMP1), and the equivalent 'Lys-|-Leu' sites in VAMP2 and VAMP3 (PubMed:8175689). Cleaves the '49-Lys-|-Ile-50' bond of A.californica synaptobrevin (AC P35589) (PubMed:8197120). This chain probably has to be partially unfolded to translocate into the eukaryotic host cell cytosol (PubMed:15584922).</text>
</comment>
<comment type="function">
    <molecule>Botulinum neurotoxin D heavy chain</molecule>
    <text evidence="1 5 10 11 13 14 27">Responsible for host epithelial cell transcytosis, host nerve cell targeting and translocation of light chain (LC) into eukaryotic host cell cytosol. Composed of 3 subdomains; the translocation domain (TD), and N-terminus and C-terminus of the receptor-binding domain (RBD). The RBD is responsible for the adherence of the toxin to the eukaryotic target cell surface. The N-terminus of the TD wraps an extended belt around the perimeter of the LC, protecting Zn(2+) in the active site; it may also prevent premature LC dissociation from the translocation channel and protect toxin prior to translocation (PubMed:17907800). The TD inserts into synaptic vesicle membrane to allow translocation into the host cytosol (By similarity). The RBD binds eukaryotic host phosphatidylethanolamine, which may serve as toxin receptor (PubMed:16115873). Treatment of synaptosomes with proteinase K does not reduce HC binding, suggesting there is no protein receptor or it is protected from extracellular proteases (PubMed:16115873). HC significantly decreases uptake and toxicity of whole BoNT/D (PubMed:19650874, PubMed:21483489). HC also interferes with uptake of tetanus toxin (PubMed:19650874). Has 2 closely located carbohydrate-binding receptor sites and binds at least 1 GT1b ganglioside (PubMed:20704566). Bind gangliosides in the order GD2 &gt; GT1b &gt; GD1b (PubMed:21632541). Interacts with eukaryotic target protein SV2B (synaptic vesicle glycoprotein 2B) (PubMed:21483489). Expression of SV2A, SV2B or SV2C in mice knocked-out for the SV2 proteins restores entry of BoNT/D and cleavage of VAMP2, suggesting SV2 acts as its receptor (PubMed:21483489). Unlike BoNT/A and BoNT/E, toxin uptake is not mediated by large extracellular loop 4 of SV2 (PubMed:21483489). Another group finds very poor interaction with SV2 proteins, suggesting the possible protein receptor may not have been identified (PubMed:21632541).</text>
</comment>
<comment type="catalytic activity">
    <reaction evidence="19 20">
        <text>Limited hydrolysis of proteins of the neuroexocytosis apparatus, synaptobrevins, SNAP25 or syntaxin. No detected action on small molecule substrates.</text>
        <dbReference type="EC" id="3.4.24.69"/>
    </reaction>
</comment>
<comment type="cofactor">
    <cofactor evidence="7 17">
        <name>Zn(2+)</name>
        <dbReference type="ChEBI" id="CHEBI:29105"/>
    </cofactor>
    <text evidence="7 17">Binds 1 zinc ion per subunit (PubMed:16519520, PubMed:26324071).</text>
</comment>
<comment type="activity regulation">
    <molecule>Botulinum neurotoxin D light chain</molecule>
    <text evidence="19">Inhibited by dipicolinic acid, captopril, 1,10-phenanthroline and EDTA.</text>
</comment>
<comment type="biophysicochemical properties">
    <kinetics>
        <KM evidence="15">28.9 uM for over-expressed human VAMP1</KM>
        <KM evidence="15">28 uM for over-expressed human VAMP2</KM>
        <KM evidence="15">11.1 uM for over-expressed human VAMP3</KM>
        <text evidence="15">kcat is 0.59, 146.60 and 113.41 sec(-1) for over-expressed human VAMP1, VAMP2 and VAMP3 respectively.</text>
    </kinetics>
</comment>
<comment type="subunit">
    <text evidence="3 6 7 8 13 14 19 20 21 31">Heterodimer; disulfide-linked heterodimer of a light chain (LC) and a heavy chain (HC) (PubMed:26324071). The LC has the proteolytic/pharmacological activity (PubMed:8175689, PubMed:8197120). The N- and C-termini of the HC mediate channel formation and eukaryotic host cell binding, respectively. Can also be purified in complex with a non-toxic component that is larger than the HC (PubMed:16252491). Single chain toxin from strain D-4947 copurifies with NTHNA, and in complexes that include NTNHA, HA-70, HA-33 and HA-17 (PubMed:11713244, PubMed:17581814). Dichain toxin from strain CB-16 phage d-16 phi copurifies with NTHNA, and in complexes that include NTNHA, HA-55, HA-33, HA-22 and HA-17 (PubMed:8569530). The stoichiometry of the whole complex has been modeled as one BoNT/D, one NTNHA, three HA-70, six HA-33 and three HA-17 (PubMed:17581814). HC interacts with eukaryotic protein synaptic vesicle glycoprotein 2B (SV2B), which may serve as its receptor (PubMed:21483489). Another group does not find a convincing interaction with SV2 (PubMed:21632541).</text>
</comment>
<comment type="subcellular location">
    <molecule>Botulinum neurotoxin type D</molecule>
    <subcellularLocation>
        <location evidence="3 8 18">Secreted</location>
    </subcellularLocation>
</comment>
<comment type="subcellular location">
    <molecule>Botulinum neurotoxin D light chain</molecule>
    <subcellularLocation>
        <location evidence="6 21">Secreted</location>
    </subcellularLocation>
    <text evidence="25 32">In animals that have ingested BoNT/D LC acts in the eukaryotic host cytosol (Probable).</text>
</comment>
<comment type="subcellular location">
    <molecule>Botulinum neurotoxin D heavy chain</molecule>
    <subcellularLocation>
        <location evidence="6 21">Secreted</location>
    </subcellularLocation>
    <text evidence="13 14 22">Upon incubation with hippocampal cell colocalizes with SV2C, probably in host synaptic vesicles (PubMed:21483489). Upon incubation with primary neurons HC colocalizes with synaptophysin probably in synaptic vesicles of presynaptic cells; a small portion also colocalizes with RAB5 and may be in synaptic vesicle protein sorting endosomes (PubMed:21632541). Probably integrates into the eukaryotic host synaptic vesicle membrane.</text>
</comment>
<comment type="domain">
    <molecule>Botulinum neurotoxin D light chain</molecule>
    <text evidence="19 20">Has protease activity (PubMed:8175689, PubMed:8197120).</text>
</comment>
<comment type="domain">
    <molecule>Botulinum neurotoxin D heavy chain</molecule>
    <text evidence="11 12 17 27">Has 3 functional domains; the translocation domain (TD) and the receptor-binding domain (RBD) which is further subdivided into N- and C-terminal domains (N-RBD and C-RBD, also called Hcn and Hcc) (PubMed:20704566, PubMed:20731382). The N-terminus of the TD wraps an extended belt around the perimeter of the LC which occludes the catalytic pocket (PubMed:26324071). The belt region may be a pseudosubstrate inhibitor which serves as an intramolecular chaperone for the LC prior to its translocation into the host cytosol (PubMed:17907800).</text>
</comment>
<comment type="biotechnology">
    <text evidence="4">Cargo proteins fused to the N-terminus of whole toxin are imported into neurons; stabilized cargo proteins are poorer substrates, suggesting partial unfolding of the cargo protein is necessary for import (PubMed:15584922).</text>
</comment>
<comment type="biotechnology">
    <text evidence="16 31">Can be used for targeted secretion inhibition in eukaryotic cells. A construct with a mammalian growth hormone-releasing factor ligand domain (GHRH) inserted between the LC and TD, when injected into rats, leads to decreased growth hormone production. The GHRH ligand domain binds to the GHRH receptor on somatotrophs where it is taken up into endosomes. There the TD inserts into the membrane, releasing LC which cleaves synaptobrevin and inhibits growth hormone exocytosis (PubMed:24029240, PubMed:26324071).</text>
</comment>
<comment type="miscellaneous">
    <text>There are seven antigenically distinct forms of botulinum neurotoxin: Types A, B, C, D, E, F, and G; new subtypes are quite frequent. Types C and D can undergo domain swapping to create hybrid types.</text>
</comment>
<comment type="miscellaneous">
    <text evidence="1">Botulism poisoning is usually food-borne, either by ingesting toxin or bacterial-contaminated food, or less frequently by inhalation poisoning. In both cases the neurotoxin binds to the apical surface of epithelial cells in the gut or airway. Toxin undergoes receptor-mediated endocytosis (using a different receptor than on target nerve cells), transcytosis across the epithelial cells and release into the general circulation. Once in the general circulation it binds to its target cells.</text>
</comment>
<comment type="miscellaneous">
    <text evidence="24 29 30">Botulinum type D neurotoxin is synthesized by D strains of C.botulinum which carry the appropriate bacteriophage.</text>
</comment>
<comment type="miscellaneous">
    <text evidence="4 6 8 18 21">Botulinum type D South African (D-SA) neurotoxin is released from bacteria as a single chain and presumably cleaved by host proteases into the active dichain (PubMed:2668193). Botulinum type D-1873 neurotoxin is released from bacteria as an already-cleaved dichain (PubMed:16252491). Toxin from strain CB-16 phage d-16 phi is released as an alread-cleaved dichain (PubMed:8569530). Another toxin (possibly from phage CE-beta) is released from over-producing E.coli as a single chain (PubMed:15584922). Type D-4947 is released as a single chain (PubMed:17581814).</text>
</comment>
<comment type="miscellaneous">
    <text evidence="22">This protein can also be encoded on a prophage.</text>
</comment>
<comment type="miscellaneous">
    <text evidence="6 9 26">BoNT/D causes animal botulism; it is 1,000-fold less toxic in chickens than BoNT/C1 (PubMed:16115873, PubMed:16252491). Cattle botulism is often caused by type D (PubMed:17913314).</text>
</comment>
<comment type="similarity">
    <text evidence="22">Belongs to the peptidase M27 family.</text>
</comment>
<comment type="caution">
    <text evidence="13 14">The existence of a proteinaceous coreceptor is unclear. In double SV2A/SV2B knockout mice this toxin does not degrade its VAMP target; introducing SV2A, SV2B or SV2C restores target cleavage (PubMed:21483489). However another group does not find a convincing interaction with SV2 (PubMed:21632541).</text>
</comment>
<comment type="online information" name="BotDB - A Database Resource for Clostridial Neurotoxins">
    <link uri="https://botdb.abcc.ncifcrf.gov/"/>
</comment>
<name>BXD_CBDP</name>
<gene>
    <name type="primary">botD</name>
</gene>
<evidence type="ECO:0000250" key="1">
    <source>
        <dbReference type="UniProtKB" id="P0DPI0"/>
    </source>
</evidence>
<evidence type="ECO:0000255" key="2">
    <source>
        <dbReference type="PROSITE-ProRule" id="PRU10095"/>
    </source>
</evidence>
<evidence type="ECO:0000269" key="3">
    <source>
    </source>
</evidence>
<evidence type="ECO:0000269" key="4">
    <source>
    </source>
</evidence>
<evidence type="ECO:0000269" key="5">
    <source>
    </source>
</evidence>
<evidence type="ECO:0000269" key="6">
    <source>
    </source>
</evidence>
<evidence type="ECO:0000269" key="7">
    <source>
    </source>
</evidence>
<evidence type="ECO:0000269" key="8">
    <source>
    </source>
</evidence>
<evidence type="ECO:0000269" key="9">
    <source>
    </source>
</evidence>
<evidence type="ECO:0000269" key="10">
    <source>
    </source>
</evidence>
<evidence type="ECO:0000269" key="11">
    <source>
    </source>
</evidence>
<evidence type="ECO:0000269" key="12">
    <source>
    </source>
</evidence>
<evidence type="ECO:0000269" key="13">
    <source>
    </source>
</evidence>
<evidence type="ECO:0000269" key="14">
    <source>
    </source>
</evidence>
<evidence type="ECO:0000269" key="15">
    <source>
    </source>
</evidence>
<evidence type="ECO:0000269" key="16">
    <source>
    </source>
</evidence>
<evidence type="ECO:0000269" key="17">
    <source>
    </source>
</evidence>
<evidence type="ECO:0000269" key="18">
    <source>
    </source>
</evidence>
<evidence type="ECO:0000269" key="19">
    <source>
    </source>
</evidence>
<evidence type="ECO:0000269" key="20">
    <source>
    </source>
</evidence>
<evidence type="ECO:0000269" key="21">
    <source>
    </source>
</evidence>
<evidence type="ECO:0000305" key="22"/>
<evidence type="ECO:0000305" key="23">
    <source>
    </source>
</evidence>
<evidence type="ECO:0000305" key="24">
    <source>
    </source>
</evidence>
<evidence type="ECO:0000305" key="25">
    <source>
    </source>
</evidence>
<evidence type="ECO:0000305" key="26">
    <source>
    </source>
</evidence>
<evidence type="ECO:0000305" key="27">
    <source>
    </source>
</evidence>
<evidence type="ECO:0000305" key="28">
    <source>
    </source>
</evidence>
<evidence type="ECO:0000305" key="29">
    <source>
    </source>
</evidence>
<evidence type="ECO:0000305" key="30">
    <source>
    </source>
</evidence>
<evidence type="ECO:0000305" key="31">
    <source>
    </source>
</evidence>
<evidence type="ECO:0000305" key="32">
    <source>
    </source>
</evidence>
<evidence type="ECO:0007744" key="33">
    <source>
        <dbReference type="PDB" id="2FPQ"/>
    </source>
</evidence>
<evidence type="ECO:0007744" key="34">
    <source>
        <dbReference type="PDB" id="3N7J"/>
    </source>
</evidence>
<evidence type="ECO:0007744" key="35">
    <source>
        <dbReference type="PDB" id="3OBR"/>
    </source>
</evidence>
<evidence type="ECO:0007744" key="36">
    <source>
        <dbReference type="PDB" id="3OBT"/>
    </source>
</evidence>
<evidence type="ECO:0007744" key="37">
    <source>
        <dbReference type="PDB" id="3RMX"/>
    </source>
</evidence>
<evidence type="ECO:0007744" key="38">
    <source>
        <dbReference type="PDB" id="3RMY"/>
    </source>
</evidence>
<evidence type="ECO:0007744" key="39">
    <source>
        <dbReference type="PDB" id="5BQM"/>
    </source>
</evidence>
<evidence type="ECO:0007744" key="40">
    <source>
        <dbReference type="PDB" id="5BQN"/>
    </source>
</evidence>
<evidence type="ECO:0007829" key="41">
    <source>
        <dbReference type="PDB" id="2FPQ"/>
    </source>
</evidence>
<evidence type="ECO:0007829" key="42">
    <source>
        <dbReference type="PDB" id="3OBT"/>
    </source>
</evidence>
<evidence type="ECO:0007829" key="43">
    <source>
        <dbReference type="PDB" id="3OGG"/>
    </source>
</evidence>
<evidence type="ECO:0007829" key="44">
    <source>
        <dbReference type="PDB" id="3RMX"/>
    </source>
</evidence>
<evidence type="ECO:0007829" key="45">
    <source>
        <dbReference type="PDB" id="3RMY"/>
    </source>
</evidence>
<evidence type="ECO:0007829" key="46">
    <source>
        <dbReference type="PDB" id="5BQM"/>
    </source>
</evidence>
<evidence type="ECO:0007829" key="47">
    <source>
        <dbReference type="PDB" id="5BQN"/>
    </source>
</evidence>
<keyword id="KW-0002">3D-structure</keyword>
<keyword id="KW-0903">Direct protein sequencing</keyword>
<keyword id="KW-1015">Disulfide bond</keyword>
<keyword id="KW-0378">Hydrolase</keyword>
<keyword id="KW-0446">Lipid-binding</keyword>
<keyword id="KW-0479">Metal-binding</keyword>
<keyword id="KW-0482">Metalloprotease</keyword>
<keyword id="KW-0528">Neurotoxin</keyword>
<keyword id="KW-0645">Protease</keyword>
<keyword id="KW-0964">Secreted</keyword>
<keyword id="KW-0800">Toxin</keyword>
<keyword id="KW-0843">Virulence</keyword>
<keyword id="KW-0862">Zinc</keyword>
<accession>P19321</accession>
<dbReference type="EC" id="3.4.24.69" evidence="19"/>
<dbReference type="EMBL" id="X54254">
    <property type="protein sequence ID" value="CAA38175.1"/>
    <property type="molecule type" value="Genomic_DNA"/>
</dbReference>
<dbReference type="EMBL" id="S49407">
    <property type="protein sequence ID" value="AAB24244.1"/>
    <property type="molecule type" value="Genomic_DNA"/>
</dbReference>
<dbReference type="PIR" id="S11455">
    <property type="entry name" value="S11455"/>
</dbReference>
<dbReference type="PDB" id="2FPQ">
    <property type="method" value="X-ray"/>
    <property type="resolution" value="1.65 A"/>
    <property type="chains" value="A=1-436"/>
</dbReference>
<dbReference type="PDB" id="3N7J">
    <property type="method" value="X-ray"/>
    <property type="resolution" value="2.00 A"/>
    <property type="chains" value="A=862-1276"/>
</dbReference>
<dbReference type="PDB" id="3OBR">
    <property type="method" value="X-ray"/>
    <property type="resolution" value="1.72 A"/>
    <property type="chains" value="A=863-1276"/>
</dbReference>
<dbReference type="PDB" id="3OBT">
    <property type="method" value="X-ray"/>
    <property type="resolution" value="2.00 A"/>
    <property type="chains" value="A=863-1276"/>
</dbReference>
<dbReference type="PDB" id="3OGG">
    <property type="method" value="X-ray"/>
    <property type="resolution" value="1.65 A"/>
    <property type="chains" value="A=863-1276"/>
</dbReference>
<dbReference type="PDB" id="3RMX">
    <property type="method" value="X-ray"/>
    <property type="resolution" value="2.75 A"/>
    <property type="chains" value="A/B/C/D=862-1276"/>
</dbReference>
<dbReference type="PDB" id="3RMY">
    <property type="method" value="X-ray"/>
    <property type="resolution" value="2.30 A"/>
    <property type="chains" value="A/B/C/D=862-1276"/>
</dbReference>
<dbReference type="PDB" id="5BQM">
    <property type="method" value="X-ray"/>
    <property type="resolution" value="3.10 A"/>
    <property type="chains" value="A/C=1-437, B/D=450-861"/>
</dbReference>
<dbReference type="PDB" id="5BQN">
    <property type="method" value="X-ray"/>
    <property type="resolution" value="2.30 A"/>
    <property type="chains" value="A=1-437, A=450-862"/>
</dbReference>
<dbReference type="PDBsum" id="2FPQ"/>
<dbReference type="PDBsum" id="3N7J"/>
<dbReference type="PDBsum" id="3OBR"/>
<dbReference type="PDBsum" id="3OBT"/>
<dbReference type="PDBsum" id="3OGG"/>
<dbReference type="PDBsum" id="3RMX"/>
<dbReference type="PDBsum" id="3RMY"/>
<dbReference type="PDBsum" id="5BQM"/>
<dbReference type="PDBsum" id="5BQN"/>
<dbReference type="SMR" id="P19321"/>
<dbReference type="DrugBank" id="DB13902">
    <property type="generic name" value="Equine Botulinum Neurotoxin D Immune FAB2"/>
</dbReference>
<dbReference type="UniLectin" id="P19321"/>
<dbReference type="ABCD" id="P19321">
    <property type="antibodies" value="36 sequenced antibodies"/>
</dbReference>
<dbReference type="BRENDA" id="3.4.24.69">
    <property type="organism ID" value="1462"/>
</dbReference>
<dbReference type="Reactome" id="R-HSA-5250955">
    <property type="pathway name" value="Toxicity of botulinum toxin type D (botD)"/>
</dbReference>
<dbReference type="EvolutionaryTrace" id="P19321"/>
<dbReference type="GO" id="GO:0005576">
    <property type="term" value="C:extracellular region"/>
    <property type="evidence" value="ECO:0007669"/>
    <property type="project" value="UniProtKB-SubCell"/>
</dbReference>
<dbReference type="GO" id="GO:1905576">
    <property type="term" value="F:ganglioside GT1b binding"/>
    <property type="evidence" value="ECO:0000314"/>
    <property type="project" value="UniProtKB"/>
</dbReference>
<dbReference type="GO" id="GO:0004222">
    <property type="term" value="F:metalloendopeptidase activity"/>
    <property type="evidence" value="ECO:0007669"/>
    <property type="project" value="UniProtKB-EC"/>
</dbReference>
<dbReference type="GO" id="GO:0008320">
    <property type="term" value="F:protein transmembrane transporter activity"/>
    <property type="evidence" value="ECO:0000304"/>
    <property type="project" value="Reactome"/>
</dbReference>
<dbReference type="GO" id="GO:0090729">
    <property type="term" value="F:toxin activity"/>
    <property type="evidence" value="ECO:0007669"/>
    <property type="project" value="UniProtKB-KW"/>
</dbReference>
<dbReference type="GO" id="GO:0008270">
    <property type="term" value="F:zinc ion binding"/>
    <property type="evidence" value="ECO:0000314"/>
    <property type="project" value="UniProtKB"/>
</dbReference>
<dbReference type="GO" id="GO:0006508">
    <property type="term" value="P:proteolysis"/>
    <property type="evidence" value="ECO:0007669"/>
    <property type="project" value="UniProtKB-KW"/>
</dbReference>
<dbReference type="CDD" id="cd23391">
    <property type="entry name" value="Toxin_R_bind_C_BoNTD_like"/>
    <property type="match status" value="1"/>
</dbReference>
<dbReference type="FunFam" id="1.20.1120.10:FF:000002">
    <property type="entry name" value="Botulinum neurotoxin type D"/>
    <property type="match status" value="1"/>
</dbReference>
<dbReference type="FunFam" id="2.80.10.50:FF:000149">
    <property type="entry name" value="Botulinum neurotoxin type D"/>
    <property type="match status" value="1"/>
</dbReference>
<dbReference type="Gene3D" id="2.60.120.200">
    <property type="match status" value="1"/>
</dbReference>
<dbReference type="Gene3D" id="2.80.10.50">
    <property type="match status" value="1"/>
</dbReference>
<dbReference type="Gene3D" id="1.20.1120.10">
    <property type="entry name" value="Clostridium botulinum neurotoxin b, 'coiled-coil' domain"/>
    <property type="match status" value="1"/>
</dbReference>
<dbReference type="Gene3D" id="3.90.1240.10">
    <property type="entry name" value="Metalloproteases ('zincins'), catalytic domain like"/>
    <property type="match status" value="2"/>
</dbReference>
<dbReference type="InterPro" id="IPR000395">
    <property type="entry name" value="Bot/tetX_LC"/>
</dbReference>
<dbReference type="InterPro" id="IPR036248">
    <property type="entry name" value="Clostridium_toxin_transloc"/>
</dbReference>
<dbReference type="InterPro" id="IPR013320">
    <property type="entry name" value="ConA-like_dom_sf"/>
</dbReference>
<dbReference type="InterPro" id="IPR011065">
    <property type="entry name" value="Kunitz_inhibitor_STI-like_sf"/>
</dbReference>
<dbReference type="InterPro" id="IPR013104">
    <property type="entry name" value="Toxin_rcpt-bd_C"/>
</dbReference>
<dbReference type="InterPro" id="IPR012928">
    <property type="entry name" value="Toxin_rcpt-bd_N"/>
</dbReference>
<dbReference type="InterPro" id="IPR012500">
    <property type="entry name" value="Toxin_trans"/>
</dbReference>
<dbReference type="Pfam" id="PF01742">
    <property type="entry name" value="Peptidase_M27"/>
    <property type="match status" value="1"/>
</dbReference>
<dbReference type="Pfam" id="PF07951">
    <property type="entry name" value="Toxin_R_bind_C"/>
    <property type="match status" value="1"/>
</dbReference>
<dbReference type="Pfam" id="PF07953">
    <property type="entry name" value="Toxin_R_bind_N"/>
    <property type="match status" value="1"/>
</dbReference>
<dbReference type="Pfam" id="PF07952">
    <property type="entry name" value="Toxin_trans"/>
    <property type="match status" value="1"/>
</dbReference>
<dbReference type="PRINTS" id="PR00760">
    <property type="entry name" value="BONTOXILYSIN"/>
</dbReference>
<dbReference type="SUPFAM" id="SSF58091">
    <property type="entry name" value="Clostridium neurotoxins, 'coiled-coil' domain"/>
    <property type="match status" value="1"/>
</dbReference>
<dbReference type="SUPFAM" id="SSF49899">
    <property type="entry name" value="Concanavalin A-like lectins/glucanases"/>
    <property type="match status" value="1"/>
</dbReference>
<dbReference type="SUPFAM" id="SSF55486">
    <property type="entry name" value="Metalloproteases ('zincins'), catalytic domain"/>
    <property type="match status" value="1"/>
</dbReference>
<dbReference type="SUPFAM" id="SSF50386">
    <property type="entry name" value="STI-like"/>
    <property type="match status" value="1"/>
</dbReference>
<dbReference type="PROSITE" id="PS00142">
    <property type="entry name" value="ZINC_PROTEASE"/>
    <property type="match status" value="1"/>
</dbReference>
<protein>
    <recommendedName>
        <fullName>Botulinum neurotoxin type D</fullName>
        <shortName>BoNT/D</shortName>
    </recommendedName>
    <alternativeName>
        <fullName>Bontoxilysin-D</fullName>
    </alternativeName>
    <component>
        <recommendedName>
            <fullName>Botulinum neurotoxin D light chain</fullName>
            <shortName>LC</shortName>
            <ecNumber evidence="19">3.4.24.69</ecNumber>
        </recommendedName>
    </component>
    <component>
        <recommendedName>
            <fullName>Botulinum neurotoxin D heavy chain</fullName>
            <shortName>HC</shortName>
        </recommendedName>
    </component>
</protein>
<organismHost>
    <name type="scientific">Clostridium botulinum</name>
    <dbReference type="NCBI Taxonomy" id="1491"/>
</organismHost>
<sequence length="1276" mass="146872">MTWPVKDFNYSDPVNDNDILYLRIPQNKLITTPVKAFMITQNIWVIPERFSSDTNPSLSKPPRPTSKYQSYYDPSYLSTDEQKDTFLKGIIKLFKRINERDIGKKLINYLVVGSPFMGDSSTPEDTFDFTRHTTNIAVEKFENGSWKVTNIITPSVLIFGPLPNILDYTASLTLQGQQSNPSFEGFGTLSILKVAPEFLLTFSDVTSNQSSAVLGKSIFCMDPVIALMHELTHSLHQLYGINIPSDKRIRPQVSEGFFSQDGPNVQFEELYTFGGLDVEIIPQIERSQLREKALGHYKDIAKRLNNINKTIPSSWISNIDKYKKIFSEKYNFDKDNTGNFVVNIDKFNSLYSDLTNVMSEVVYSSQYNVKNRTHYFSRHYLPVFANILDDNIYTIRDGFNLTNKGFNIENSGQNIERNPALQKLSSESVVDLFTKVCLRLTKNSRDDSTCIKVKNNRLPYVADKDSISQEIFENKIITDETNVQNYSDKFSLDESILDGQVPINPEIVDPLLPNVNMEPLNLPGEEIVFYDDITKYVDYLNSYYYLESQKLSNNVENITLTTSVEEALGYSNKIYTFLPSLAEKVNKGVQAGLFLNWANEVVEDFTTNIMKKDTLDKISDVSVIIPYIGPALNIGNSALRGNFNQAFATAGVAFLLEGFPEFTIPALGVFTFYSSIQEREKIIKTIENCLEQRVKRWKDSYQWMVSNWLSRITTQFNHINYQMYDSLSYQADAIKAKIDLEYKKYSGSDKENIKSQVENLKNSLDVKISEAMNNINKFIRECSVTYLFKNMLPKVIDELNKFDLRTKTELINLIDSHNIILVGEVDRLKAKVNESFENTMPFNIFSYTNNSLLKDIINEYFNSINDSKILSLQNKKNALVDTSGYNAEVRVGDNVQLNTIYTNDFKLSSSGDKIIVNLNNNILYSAIYENSSVSFWIKISKDLTNSHNEYTIINSIEQNSGWKLCIRNGNIEWILQDVNRKYKSLIFDYSESLSHTGYTNKWFFVTITNNIMGYMKLYINGELKQSQKIEDLDEVKLDKTIVFGIDENIDENQMLWIRDFNIFSKELSNEDINIVYEGQILRNVIKDYWGNPLKFDTEYYIINDNYIDRYIAPESNVLVLVQYPDRSKLYTGNPITIKSVSDKNPYSRILNGDNIILHMLYNSRKYMIIRDTDTIYATQGGECSQNCVYALKLQSNLGNYGIGIFSIKNIVSKNKYCSQIFSSFRENTMLLADIYKPWRFSFKNAYTPVAVTNYETKLLSTSSFWKFISRDPGWVE</sequence>
<reference key="1">
    <citation type="journal article" date="1990" name="Nucleic Acids Res.">
        <title>Nucleotide sequence of the gene encoding Clostridium botulinum neurotoxin type D.</title>
        <authorList>
            <person name="Binz T."/>
            <person name="Kurazono H."/>
            <person name="Popoff M.R."/>
            <person name="Eklund M.W."/>
            <person name="Sakaguchi G."/>
            <person name="Kozaki S."/>
            <person name="Krieglstein K."/>
            <person name="Henschen A."/>
            <person name="Gill D.M."/>
            <person name="Niemann H."/>
        </authorList>
    </citation>
    <scope>NUCLEOTIDE SEQUENCE [GENOMIC DNA]</scope>
    <source>
        <strain>BVD/-3 / Type D</strain>
    </source>
</reference>
<reference key="2">
    <citation type="journal article" date="1992" name="J. Vet. Med. Sci.">
        <title>The complete amino acid sequence of the Clostridium botulinum type D neurotoxin, deduced by nucleotide sequence analysis of the encoding phage d-16 phi genome.</title>
        <authorList>
            <person name="Sunagawa H."/>
            <person name="Ohyama T."/>
            <person name="Watanabe T."/>
            <person name="Inoue K."/>
        </authorList>
    </citation>
    <scope>NUCLEOTIDE SEQUENCE [GENOMIC DNA]</scope>
    <source>
        <strain>CB-16 / Type D / phage d-16 phi</strain>
    </source>
</reference>
<reference key="3">
    <citation type="journal article" date="1989" name="Infect. Immun.">
        <title>Molecular diversity of neurotoxins from Clostridium botulinum type D strains.</title>
        <authorList>
            <person name="Moriishi K."/>
            <person name="Syuto B."/>
            <person name="Kubo S."/>
            <person name="Oguma K."/>
        </authorList>
    </citation>
    <scope>PARTIAL PROTEIN SEQUENCE</scope>
    <scope>SUBCELLULAR LOCATION (BOTULINUM NEUROTOXIN TYPE D)</scope>
    <scope>RELEASED AS SINGLE CHAIN</scope>
    <source>
        <strain>D-1873 / Type D</strain>
        <strain>South African / Type D</strain>
    </source>
</reference>
<reference key="4">
    <citation type="journal article" date="1995" name="Microbiol. Immunol.">
        <title>Characterization of nontoxic-nonhemagglutinin component of the two types of progenitor toxin (M and L) produced by Clostridium botulinum type D CB-16.</title>
        <authorList>
            <person name="Ohyama T."/>
            <person name="Watanabe T."/>
            <person name="Fujinaga Y."/>
            <person name="Inoue K."/>
            <person name="Sunagawa H."/>
            <person name="Fujii N."/>
            <person name="Oguma K."/>
        </authorList>
    </citation>
    <scope>PROTEIN SEQUENCE OF 2-21 AND 443-462</scope>
    <scope>RELEASED AS DICHAIN</scope>
    <scope>SUBUNIT</scope>
    <scope>SUBCELLULAR LOCATION</scope>
    <source>
        <strain>CB-16 / Type D / phage d-16 phi</strain>
    </source>
</reference>
<reference key="5">
    <citation type="journal article" date="2002" name="J. Biol. Chem.">
        <title>In vitro reconstitution of the Clostridium botulinum type D progenitor toxin.</title>
        <authorList>
            <person name="Kouguchi H."/>
            <person name="Watanabe T."/>
            <person name="Sagane Y."/>
            <person name="Sunagawa H."/>
            <person name="Ohyama T."/>
        </authorList>
    </citation>
    <scope>NUCLEOTIDE SEQUENCE [GENOMIC DNA]</scope>
    <scope>PROTEIN SEQUENCE OF 2-11 AND 443-456</scope>
    <scope>RELEASED AS SINGLE CHAIN</scope>
    <scope>SUBUNIT</scope>
    <scope>SUBCELLULAR LOCATION</scope>
    <source>
        <strain>D-4947 / Type D</strain>
    </source>
</reference>
<reference key="6">
    <citation type="journal article" date="2007" name="J. Biol. Chem.">
        <title>A novel subunit structure of Clostridium botulinum serotype D toxin complex with three extended arms.</title>
        <authorList>
            <person name="Hasegawa K."/>
            <person name="Watanabe T."/>
            <person name="Suzuki T."/>
            <person name="Yamano A."/>
            <person name="Oikawa T."/>
            <person name="Sato Y."/>
            <person name="Kouguchi H."/>
            <person name="Yoneyama T."/>
            <person name="Niwa K."/>
            <person name="Ikeda T."/>
            <person name="Ohyama T."/>
        </authorList>
    </citation>
    <scope>PROTEIN SEQUENCE OF 2-6</scope>
    <scope>RELEASED AS SINGLE CHAIN</scope>
    <scope>SUBUNIT</scope>
    <scope>SUBCELLULAR LOCATION</scope>
    <source>
        <strain>D-4947 / Type D</strain>
    </source>
</reference>
<reference key="7">
    <citation type="journal article" date="1994" name="J. Biol. Chem.">
        <title>Cleavage of members of the synaptobrevin/VAMP family by types D and F botulinal neurotoxins and tetanus toxin.</title>
        <authorList>
            <person name="Yamasaki S."/>
            <person name="Baumeister A."/>
            <person name="Binz T."/>
            <person name="Blasi J."/>
            <person name="Link E."/>
            <person name="Cornille F."/>
            <person name="Roques B."/>
            <person name="Fykse E.M."/>
            <person name="Suedhof T.C."/>
            <person name="Jahn R."/>
            <person name="Niemann H."/>
        </authorList>
    </citation>
    <scope>FUNCTION (BOTULINUM NEUROTOXIN TYPE D AND BOTULINUM NEUROTOXIN D LIGHT CHAIN)</scope>
    <scope>IDENTIFICATION OF SUBSTRATE</scope>
    <scope>CATALYTIC ACTIVITY</scope>
    <scope>ACTIVITY REGULATION (BOTULINUM NEUROTOXIN D LIGHT CHAIN)</scope>
    <scope>SUBCELLULAR LOCATION (BOTULINUM NEUROTOXIN D LIGHT CHAIN)</scope>
    <source>
        <strain>D-1873 / Type D</strain>
    </source>
</reference>
<reference key="8">
    <citation type="journal article" date="1994" name="Proc. Natl. Acad. Sci. U.S.A.">
        <title>Synaptobrevin/vesicle-associated membrane protein (VAMP) of Aplysia californica: structure and proteolysis by tetanus toxin and botulinal neurotoxins type D and F.</title>
        <authorList>
            <person name="Yamasaki S."/>
            <person name="Hu Y."/>
            <person name="Binz T."/>
            <person name="Kalkuhl A."/>
            <person name="Kurazono H."/>
            <person name="Tamura T."/>
            <person name="Jahn R."/>
            <person name="Kandel E."/>
            <person name="Niemann H."/>
        </authorList>
    </citation>
    <scope>FUNCTION (BOTULINUM NEUROTOXIN D LIGHT CHAIN)</scope>
    <scope>CATALYTIC ACTIVITY</scope>
    <source>
        <strain>Type D</strain>
    </source>
</reference>
<reference key="9">
    <citation type="journal article" date="2004" name="J. Neurochem.">
        <title>Botulinum neurotoxin type D enables cytosolic delivery of enzymatically active cargo proteins to neurones via unfolded translocation intermediates.</title>
        <authorList>
            <person name="Bade S."/>
            <person name="Rummel A."/>
            <person name="Reisinger C."/>
            <person name="Karnath T."/>
            <person name="Ahnert-Hilger G."/>
            <person name="Bigalke H."/>
            <person name="Binz T."/>
        </authorList>
    </citation>
    <scope>SUBCELLULAR LOCATION (BOTULINUM NEUROTOXIN D LIGHT CHAIN)</scope>
    <scope>RELEASED AS SINGLE CHAIN</scope>
    <scope>BIOTECHNOLOGY</scope>
    <source>
        <strain>Type D</strain>
    </source>
</reference>
<reference key="10">
    <citation type="journal article" date="2005" name="Avian Dis.">
        <title>Characterization of the neurotoxin produced by isolates associated with avian botulism.</title>
        <authorList>
            <person name="Takeda M."/>
            <person name="Tsukamoto K."/>
            <person name="Kohda T."/>
            <person name="Matsui M."/>
            <person name="Mukamoto M."/>
            <person name="Kozaki S."/>
        </authorList>
    </citation>
    <scope>FUNCTION (BOTULINUM NEUROTOXIN TYPE D)</scope>
    <scope>RELEASED AS DICHAIN</scope>
    <scope>EUKARYOTIC TARGET RANGE</scope>
    <scope>SUBUNIT</scope>
    <scope>SUBCELLULAR LOCATION</scope>
    <source>
        <strain>D-1873 / Type D</strain>
    </source>
</reference>
<reference key="11">
    <citation type="journal article" date="2005" name="J. Biol. Chem.">
        <title>Binding of Clostridium botulinum type C and D neurotoxins to ganglioside and phospholipid. Novel insights into the receptor for clostridial neurotoxins.</title>
        <authorList>
            <person name="Tsukamoto K."/>
            <person name="Kohda T."/>
            <person name="Mukamoto M."/>
            <person name="Takeuchi K."/>
            <person name="Ihara H."/>
            <person name="Saito M."/>
            <person name="Kozaki S."/>
        </authorList>
    </citation>
    <scope>FUNCTION (BOTULINUM NEUROTOXIN D HEAVY CHAIN)</scope>
    <scope>POSSIBLE LACK OF PROTEINACEOUS RECEPTOR</scope>
    <scope>DOMAIN</scope>
    <scope>LIPID-BINDING</scope>
    <source>
        <strain>D-1873 / Type D</strain>
    </source>
</reference>
<reference key="12">
    <citation type="journal article" date="2007" name="PLoS Pathog.">
        <title>Botulinum neurotoxin heavy chain belt as an intramolecular chaperone for the light chain.</title>
        <authorList>
            <person name="Brunger A.T."/>
            <person name="Breidenbach M.A."/>
            <person name="Jin R."/>
            <person name="Fischer A."/>
            <person name="Santos J.S."/>
            <person name="Montal M."/>
        </authorList>
    </citation>
    <scope>DISCUSSION OF BELT FUNCTION</scope>
    <scope>DOMAIN</scope>
</reference>
<reference key="13">
    <citation type="journal article" date="2007" name="Vaccine">
        <title>Cattle immune response to botulinum type D toxoid: results of a vaccination study.</title>
        <authorList>
            <person name="Steinman A."/>
            <person name="Galon N."/>
            <person name="Arazi A."/>
            <person name="Bar-Giora Y."/>
            <person name="Shpigel N.Y."/>
        </authorList>
    </citation>
    <scope>EUKARYOTIC TARGET RANGE</scope>
</reference>
<reference key="14">
    <citation type="journal article" date="2009" name="J. Neurochem.">
        <title>Botulinum neurotoxins C, E and F bind gangliosides via a conserved binding site prior to stimulation-dependent uptake with botulinum neurotoxin F utilising the three isoforms of SV2 as second receptor.</title>
        <authorList>
            <person name="Rummel A."/>
            <person name="Haefner K."/>
            <person name="Mahrhold S."/>
            <person name="Darashchonak N."/>
            <person name="Holt M."/>
            <person name="Jahn R."/>
            <person name="Beermann S."/>
            <person name="Karnath T."/>
            <person name="Bigalke H."/>
            <person name="Binz T."/>
        </authorList>
    </citation>
    <scope>FUNCTION (BOTULINUM NEUROTOXIN TYPE D AND BOTULINUM NEUROTOXIN D HEAVY CHAIN)</scope>
</reference>
<reference key="15">
    <citation type="journal article" date="2011" name="PLoS Pathog.">
        <title>Botulinum neurotoxin D uses synaptic vesicle protein SV2 and gangliosides as receptors.</title>
        <authorList>
            <person name="Peng L."/>
            <person name="Tepp W.H."/>
            <person name="Johnson E.A."/>
            <person name="Dong M."/>
        </authorList>
    </citation>
    <scope>FUNCTION (BOTULINUM NEUROTOXIN TYPE D AND BOTULINUM NEUROTOXIN D HEAVY CHAIN)</scope>
    <scope>POSSIBLE PROTEIN RECEPTOR</scope>
    <scope>INTERACTION WITH EUKARYOTIC SV2B</scope>
    <scope>SUBCELLULAR LOCATION</scope>
    <source>
        <strain>BVD/-3 / Type D</strain>
    </source>
</reference>
<reference key="16">
    <citation type="journal article" date="2012" name="Microbiol. Immunol.">
        <title>Specificity of botulinum protease for human VAMP family proteins.</title>
        <authorList>
            <person name="Yamamoto H."/>
            <person name="Ida T."/>
            <person name="Tsutsuki H."/>
            <person name="Mori M."/>
            <person name="Matsumoto T."/>
            <person name="Kohda T."/>
            <person name="Mukamoto M."/>
            <person name="Goshima N."/>
            <person name="Kozaki S."/>
            <person name="Ihara H."/>
        </authorList>
    </citation>
    <scope>FUNCTION (BOTULINUM NEUROTOXIN D LIGHT CHAIN)</scope>
    <scope>SUBSTRATE SPECIFICITY</scope>
    <scope>BIOPHYSICOCHEMICAL PROPERTIES</scope>
</reference>
<reference key="17">
    <citation type="journal article" date="2013" name="Endocrinology">
        <title>Comparative inhibition of the GH/IGF-I axis obtained with either the targeted secretion inhibitor SXN101959 or the somatostatin analog octreotide in growing male rats.</title>
        <authorList>
            <person name="Somm E."/>
            <person name="Bonnet N."/>
            <person name="Zizzari P."/>
            <person name="Tolle V."/>
            <person name="Toulotte A."/>
            <person name="Jones R."/>
            <person name="Epelbaum J."/>
            <person name="Martinez A."/>
            <person name="Hueppi P.S."/>
            <person name="Aubert M.L."/>
        </authorList>
    </citation>
    <scope>BIOTECHNOLOGY</scope>
</reference>
<reference key="18">
    <citation type="journal article" date="2017" name="Pharmacol. Rev.">
        <title>Botulinum neurotoxins: Biology, pharmacology, and toxicology.</title>
        <authorList>
            <person name="Pirazzini M."/>
            <person name="Rossetto O."/>
            <person name="Eleopra R."/>
            <person name="Montecucco C."/>
        </authorList>
    </citation>
    <scope>REVIEW</scope>
</reference>
<reference evidence="33" key="19">
    <citation type="journal article" date="2006" name="Biochemistry">
        <title>Structure of botulinum neurotoxin type D light chain at 1.65 A resolution: repercussions for VAMP-2 substrate specificity.</title>
        <authorList>
            <person name="Arndt J.W."/>
            <person name="Chai Q."/>
            <person name="Christian T."/>
            <person name="Stevens R.C."/>
        </authorList>
    </citation>
    <scope>X-RAY CRYSTALLOGRAPHY (1.65 ANGSTROMS) OF 1-436 IN COMPLEX WITH ZINC</scope>
    <scope>COFACTOR</scope>
    <source>
        <strain>D-1873 / Type D / phage d-16 phi</strain>
    </source>
</reference>
<reference evidence="34" key="20">
    <citation type="journal article" date="2010" name="Biochemistry">
        <title>Identification of a unique ganglioside binding loop within botulinum neurotoxins C and D-SA.</title>
        <authorList>
            <person name="Karalewitz A.P."/>
            <person name="Kroken A.R."/>
            <person name="Fu Z."/>
            <person name="Baldwin M.R."/>
            <person name="Kim J.J."/>
            <person name="Barbieri J.T."/>
        </authorList>
    </citation>
    <scope>X-RAY CRYSTALLOGRAPHY (2.00 ANGSTROMS) OF 862-1276</scope>
    <scope>DOMAIN</scope>
    <source>
        <strain>D-1873 / Type D / phage d-16 phi</strain>
    </source>
</reference>
<reference evidence="35 36" key="21">
    <citation type="journal article" date="2010" name="Biochem. J.">
        <title>Botulinum neurotoxin serotype D attacks neurons via two carbohydrate-binding sites in a ganglioside-dependent manner.</title>
        <authorList>
            <person name="Strotmeier J."/>
            <person name="Lee K."/>
            <person name="Volker A.K."/>
            <person name="Mahrhold S."/>
            <person name="Zong Y."/>
            <person name="Zeiser J."/>
            <person name="Zhou J."/>
            <person name="Pich A."/>
            <person name="Bigalke H."/>
            <person name="Binz T."/>
            <person name="Rummel A."/>
            <person name="Jin R."/>
        </authorList>
    </citation>
    <scope>X-RAY CRYSTALLOGRAPHY (1.72 ANGSTROMS) OF 863-1276 IN COMPLEX WITH N-ACETYLNEURAMINIC ACID</scope>
    <scope>FUNCTION (BOTULINUM NEUROTOXIN TYPE D AND BOTULINUM NEUROTOXIN D HEAVY CHAIN)</scope>
    <scope>DOMAIN</scope>
    <scope>GANGLIOSIDE-BINDING</scope>
    <scope>MUTAGENESIS OF LYS-1192; ASP-1233; TYR-1235; TRP-1238; ARG-1239; PHE-1240; PHE-1242; ASN-1244; TYR-1246; VAL-1251; ASN-1253; LYS-1257 AND SER-1262</scope>
    <source>
        <strain>BVD/-3 / Type D</strain>
    </source>
</reference>
<reference evidence="37 38" key="22">
    <citation type="journal article" date="2011" name="J. Biol. Chem.">
        <title>Novel ganglioside-mediated entry of botulinum neurotoxin serotype D into neurons.</title>
        <authorList>
            <person name="Kroken A.R."/>
            <person name="Karalewitz A.P."/>
            <person name="Fu Z."/>
            <person name="Kim J.J."/>
            <person name="Barbieri J.T."/>
        </authorList>
    </citation>
    <scope>X-RAY CRYSTALLOGRAPHY (2.30 ANGSTROMS) OF MUTATED 862-1276</scope>
    <scope>FUNCTION (BOTULINUM NEUROTOXIN TYPE D AND BOTULINUM NEUROTOXIN D HEAVY CHAIN)</scope>
    <scope>SUBCELLULAR LOCATION (BOTULINUM NEUROTOXIN D HEAVY CHAIN)</scope>
    <scope>GANGLIOSIDE-BINDING</scope>
    <scope>MUTAGENESIS OF TRP-1238; ARG-1239 AND PHE-1240</scope>
    <source>
        <strain>D-1873 / Type D</strain>
    </source>
</reference>
<reference evidence="39 40" key="23">
    <citation type="journal article" date="2015" name="Sci. Rep.">
        <title>Structural analysis of Clostridium botulinum neurotoxin type D as a platform for the development of targeted secretion inhibitors.</title>
        <authorList>
            <person name="Masuyer G."/>
            <person name="Davies J.R."/>
            <person name="Moore K."/>
            <person name="Chaddock J.A."/>
            <person name="Ravi Acharya K."/>
        </authorList>
    </citation>
    <scope>X-RAY CRYSTALLOGRAPHY (2.30 ANGSTROMS) OF 1-896 IN COMPLEX WITH ZINC</scope>
    <scope>COFACTOR</scope>
    <scope>DOMAIN</scope>
    <scope>BIOTECHNOLOGY</scope>
    <scope>DISULFIDE BOND</scope>
</reference>
<feature type="initiator methionine" description="Removed" evidence="3 8 21">
    <location>
        <position position="1"/>
    </location>
</feature>
<feature type="chain" id="PRO_0000444906" description="Botulinum neurotoxin type D">
    <location>
        <begin position="2"/>
        <end position="1276"/>
    </location>
</feature>
<feature type="chain" id="PRO_0000029219" description="Botulinum neurotoxin D light chain">
    <location>
        <begin position="2"/>
        <end position="442"/>
    </location>
</feature>
<feature type="chain" id="PRO_0000029220" description="Botulinum neurotoxin D heavy chain" evidence="21 23">
    <location>
        <begin position="443"/>
        <end position="1276"/>
    </location>
</feature>
<feature type="region of interest" description="Translocation domain (TD)" evidence="11 12">
    <location>
        <begin position="443"/>
        <end position="862"/>
    </location>
</feature>
<feature type="region of interest" description="Belt" evidence="17">
    <location>
        <begin position="458"/>
        <end position="547"/>
    </location>
</feature>
<feature type="region of interest" description="N-terminus of receptor binding domain (N-RBD), Hcn" evidence="11 12">
    <location>
        <begin position="863"/>
        <end position="1082"/>
    </location>
</feature>
<feature type="region of interest" description="C-terminus of receptor binding domain (C-RBD), Hcc" evidence="11 12">
    <location>
        <begin position="1083"/>
        <end position="1276"/>
    </location>
</feature>
<feature type="region of interest" description="Ganglioside-binding loop" evidence="14">
    <location>
        <begin position="1235"/>
        <end position="1245"/>
    </location>
</feature>
<feature type="short sequence motif" description="Host ganglioside-binding motif" evidence="1 28">
    <location>
        <begin position="1252"/>
        <end position="1255"/>
    </location>
</feature>
<feature type="active site" evidence="2">
    <location>
        <position position="230"/>
    </location>
</feature>
<feature type="binding site" evidence="7 17 33 39">
    <location>
        <position position="229"/>
    </location>
    <ligand>
        <name>Zn(2+)</name>
        <dbReference type="ChEBI" id="CHEBI:29105"/>
        <note>catalytic</note>
    </ligand>
</feature>
<feature type="binding site" evidence="7 17 33 39">
    <location>
        <position position="233"/>
    </location>
    <ligand>
        <name>Zn(2+)</name>
        <dbReference type="ChEBI" id="CHEBI:29105"/>
        <note>catalytic</note>
    </ligand>
</feature>
<feature type="binding site" evidence="7 17 33 39">
    <location>
        <position position="269"/>
    </location>
    <ligand>
        <name>Zn(2+)</name>
        <dbReference type="ChEBI" id="CHEBI:29105"/>
        <note>catalytic</note>
    </ligand>
</feature>
<feature type="binding site" evidence="11 36">
    <location>
        <position position="1172"/>
    </location>
    <ligand>
        <name>N-acetyl-beta-neuraminate</name>
        <dbReference type="ChEBI" id="CHEBI:58705"/>
    </ligand>
</feature>
<feature type="binding site" evidence="11 36">
    <location>
        <position position="1173"/>
    </location>
    <ligand>
        <name>N-acetyl-beta-neuraminate</name>
        <dbReference type="ChEBI" id="CHEBI:58705"/>
    </ligand>
</feature>
<feature type="binding site" evidence="11 36">
    <location>
        <position position="1192"/>
    </location>
    <ligand>
        <name>N-acetyl-beta-neuraminate</name>
        <dbReference type="ChEBI" id="CHEBI:58705"/>
    </ligand>
</feature>
<feature type="binding site" evidence="11 36">
    <location>
        <position position="1239"/>
    </location>
    <ligand>
        <name>N-acetyl-beta-neuraminate</name>
        <dbReference type="ChEBI" id="CHEBI:58705"/>
    </ligand>
</feature>
<feature type="disulfide bond" description="Interchain (between light and heavy chains)" evidence="31 39 40">
    <location>
        <begin position="437"/>
        <end position="450"/>
    </location>
</feature>
<feature type="sequence variant" description="In strain: D-SA.">
    <original>ND</original>
    <variation>PV</variation>
    <location>
        <begin position="15"/>
        <end position="16"/>
    </location>
</feature>
<feature type="sequence variant" description="In strain: D-1873.">
    <original>ND</original>
    <variation>LQ</variation>
    <location>
        <begin position="17"/>
        <end position="18"/>
    </location>
</feature>
<feature type="sequence variant" description="In strain: D-SA and D-4947.">
    <original>K</original>
    <variation>Q</variation>
    <location>
        <position position="452"/>
    </location>
</feature>
<feature type="sequence variant" description="In strain: D-1873.">
    <original>R</original>
    <variation>F</variation>
    <location>
        <position position="457"/>
    </location>
</feature>
<feature type="sequence variant" description="In strain: D-SA.">
    <original>R</original>
    <variation>T</variation>
    <location>
        <position position="457"/>
    </location>
</feature>
<feature type="sequence variant" description="In strain: D-1873.">
    <original>A</original>
    <variation>D</variation>
    <location>
        <position position="462"/>
    </location>
</feature>
<feature type="sequence variant" description="In strain: CB16.">
    <original>K</original>
    <variation>N</variation>
    <location>
        <position position="489"/>
    </location>
</feature>
<feature type="sequence variant" description="In strain: CB16.">
    <original>N</original>
    <variation>K</variation>
    <location>
        <position position="644"/>
    </location>
</feature>
<feature type="sequence variant" description="In strain: CB16.">
    <original>Q</original>
    <variation>R</variation>
    <location>
        <position position="1122"/>
    </location>
</feature>
<feature type="mutagenesis site" description="Decreased binding of heavy chain (HC) to synaptosomes. Significantly decreased HC binding, whole toxin is dramatically less neurotoxic; when associated with A-1239." evidence="11">
    <original>K</original>
    <variation>A</variation>
    <location>
        <position position="1192"/>
    </location>
</feature>
<feature type="mutagenesis site" description="Significantly decreased binding of heavy chain (HC) to synaptosomes, whole toxin is significantly less neurotoxic. Dramatically decreased HC binding, whole toxin is dramatically less neurotoxic; when associated with A-1239." evidence="11">
    <original>D</original>
    <variation>A</variation>
    <location>
        <position position="1233"/>
    </location>
</feature>
<feature type="mutagenesis site" description="Significantly decreased binding of heavy chain to synaptosomes, whole toxin is significantly less neurotoxic." evidence="11">
    <original>Y</original>
    <variation>A</variation>
    <location>
        <position position="1235"/>
    </location>
</feature>
<feature type="mutagenesis site" description="Increased binding of heavy chain to synaptosomes, whole toxin has half neurotoxicity." evidence="11">
    <original>Y</original>
    <variation>W</variation>
    <location>
        <position position="1235"/>
    </location>
</feature>
<feature type="mutagenesis site" description="Dramatically decreased binding of heavy chain (HC) to synaptosomes, whole toxin is dramatically less neurotoxic. Loss of HC binding to GD1b, GT1b, GD2 and synaptic vesicles, ganglioside-binding loop is disordered in crystal." evidence="11 14">
    <original>W</original>
    <variation>A</variation>
    <location>
        <position position="1238"/>
    </location>
</feature>
<feature type="mutagenesis site" description="Decreased binding of heavy chain to synaptosomes, whole toxin is significantly less neurotoxic." evidence="11">
    <original>W</original>
    <variation>F</variation>
    <variation>Y</variation>
    <location>
        <position position="1238"/>
    </location>
</feature>
<feature type="mutagenesis site" description="Significantly decreased binding of heavy chain to synaptosomes, whole toxin is dramatically less neurotoxic." evidence="11">
    <original>W</original>
    <variation>L</variation>
    <location>
        <position position="1238"/>
    </location>
</feature>
<feature type="mutagenesis site" description="Significantly decreased binding of heavy chain (HC) to synaptosomes, whole toxin is dramatically less neurotoxic. Dramatically decreased HC binding, whole toxin is dramatically less neurotoxic; when associated with A-1192. Significantly decreased HC binding, whole toxin is dramatically less neurotoxic; when associated with A-1233. Decrease in HC binding to GD1b, GT1b, GD2 and synaptic vesicles." evidence="11 14">
    <original>R</original>
    <variation>A</variation>
    <location>
        <position position="1239"/>
    </location>
</feature>
<feature type="mutagenesis site" description="Significantly decreased binding of heavy chain to synaptosomes, whole toxin is dramatically less neurotoxic." evidence="11">
    <original>R</original>
    <variation>Y</variation>
    <location>
        <position position="1239"/>
    </location>
</feature>
<feature type="mutagenesis site" description="Significantly decreased binding of heavy chain to synaptosomes, whole toxin is dramatically less neurotoxic. Significant decrease in HC binding to GD1b, GT1b, GD2 and synaptic vesicles, GBL is well ordered in crystal." evidence="11">
    <original>F</original>
    <variation>A</variation>
    <location>
        <position position="1240"/>
    </location>
</feature>
<feature type="mutagenesis site" description="Increased binding of heavy chain (HC) to synaptosomes, whole toxin is slightly less neurotoxic. Slightly greater than wild-type HC binding to GT1b." evidence="11 14">
    <original>F</original>
    <variation>W</variation>
    <location>
        <position position="1240"/>
    </location>
</feature>
<feature type="mutagenesis site" description="Significantly decreased binding of heavy chain to synaptosomes, whole toxin is dramatically less neurotoxic." evidence="11">
    <original>F</original>
    <variation>S</variation>
    <location>
        <position position="1242"/>
    </location>
</feature>
<feature type="mutagenesis site" description="No effect on heavy chain binding to synaptosomes, whole toxin is slightly less neurotoxic." evidence="11">
    <original>F</original>
    <variation>W</variation>
    <location>
        <position position="1242"/>
    </location>
</feature>
<feature type="mutagenesis site" description="Significantly decreased binding of heavy chain to synaptosomes, whole toxin is significantly less neurotoxic." evidence="11">
    <original>N</original>
    <variation>A</variation>
    <location>
        <position position="1244"/>
    </location>
</feature>
<feature type="mutagenesis site" description="Significantly decreased binding of heavy chain to synaptosomes, whole toxin is significantly less neurotoxic." evidence="11">
    <original>Y</original>
    <variation>A</variation>
    <variation>S</variation>
    <variation>W</variation>
    <location>
        <position position="1246"/>
    </location>
</feature>
<feature type="mutagenesis site" description="Significantly decreased binding of heavy chain to synaptosomes, whole toxin is significantly less neurotoxic." evidence="11">
    <original>V</original>
    <variation>F</variation>
    <location>
        <position position="1251"/>
    </location>
</feature>
<feature type="mutagenesis site" description="Significantly decreased binding of heavy chain to synaptosomes." evidence="11">
    <original>N</original>
    <variation>A</variation>
    <location>
        <position position="1253"/>
    </location>
</feature>
<feature type="mutagenesis site" description="Decreased binding of heavy chain to synaptosomes." evidence="11">
    <original>K</original>
    <variation>A</variation>
    <location>
        <position position="1257"/>
    </location>
</feature>
<feature type="mutagenesis site" description="Decreased binding of heavy chain to synaptosomes." evidence="11">
    <original>S</original>
    <variation>F</variation>
    <location>
        <position position="1262"/>
    </location>
</feature>
<feature type="strand" evidence="41">
    <location>
        <begin position="16"/>
        <end position="23"/>
    </location>
</feature>
<feature type="strand" evidence="41">
    <location>
        <begin position="34"/>
        <end position="40"/>
    </location>
</feature>
<feature type="strand" evidence="41">
    <location>
        <begin position="43"/>
        <end position="46"/>
    </location>
</feature>
<feature type="strand" evidence="47">
    <location>
        <begin position="53"/>
        <end position="55"/>
    </location>
</feature>
<feature type="turn" evidence="41">
    <location>
        <begin position="67"/>
        <end position="69"/>
    </location>
</feature>
<feature type="turn" evidence="41">
    <location>
        <begin position="74"/>
        <end position="77"/>
    </location>
</feature>
<feature type="helix" evidence="41">
    <location>
        <begin position="80"/>
        <end position="97"/>
    </location>
</feature>
<feature type="helix" evidence="41">
    <location>
        <begin position="101"/>
        <end position="112"/>
    </location>
</feature>
<feature type="strand" evidence="46">
    <location>
        <begin position="120"/>
        <end position="122"/>
    </location>
</feature>
<feature type="strand" evidence="41">
    <location>
        <begin position="126"/>
        <end position="128"/>
    </location>
</feature>
<feature type="turn" evidence="41">
    <location>
        <begin position="132"/>
        <end position="134"/>
    </location>
</feature>
<feature type="strand" evidence="41">
    <location>
        <begin position="136"/>
        <end position="142"/>
    </location>
</feature>
<feature type="strand" evidence="41">
    <location>
        <begin position="145"/>
        <end position="152"/>
    </location>
</feature>
<feature type="strand" evidence="41">
    <location>
        <begin position="155"/>
        <end position="159"/>
    </location>
</feature>
<feature type="helix" evidence="47">
    <location>
        <begin position="170"/>
        <end position="172"/>
    </location>
</feature>
<feature type="helix" evidence="47">
    <location>
        <begin position="176"/>
        <end position="178"/>
    </location>
</feature>
<feature type="helix" evidence="41">
    <location>
        <begin position="181"/>
        <end position="183"/>
    </location>
</feature>
<feature type="strand" evidence="41">
    <location>
        <begin position="184"/>
        <end position="186"/>
    </location>
</feature>
<feature type="strand" evidence="41">
    <location>
        <begin position="190"/>
        <end position="193"/>
    </location>
</feature>
<feature type="strand" evidence="41">
    <location>
        <begin position="201"/>
        <end position="203"/>
    </location>
</feature>
<feature type="turn" evidence="47">
    <location>
        <begin position="212"/>
        <end position="214"/>
    </location>
</feature>
<feature type="strand" evidence="41">
    <location>
        <begin position="218"/>
        <end position="220"/>
    </location>
</feature>
<feature type="helix" evidence="41">
    <location>
        <begin position="223"/>
        <end position="238"/>
    </location>
</feature>
<feature type="strand" evidence="47">
    <location>
        <begin position="247"/>
        <end position="249"/>
    </location>
</feature>
<feature type="helix" evidence="41">
    <location>
        <begin position="267"/>
        <end position="273"/>
    </location>
</feature>
<feature type="helix" evidence="41">
    <location>
        <begin position="275"/>
        <end position="280"/>
    </location>
</feature>
<feature type="helix" evidence="41">
    <location>
        <begin position="283"/>
        <end position="306"/>
    </location>
</feature>
<feature type="strand" evidence="41">
    <location>
        <begin position="309"/>
        <end position="312"/>
    </location>
</feature>
<feature type="helix" evidence="41">
    <location>
        <begin position="313"/>
        <end position="318"/>
    </location>
</feature>
<feature type="helix" evidence="41">
    <location>
        <begin position="319"/>
        <end position="329"/>
    </location>
</feature>
<feature type="helix" evidence="41">
    <location>
        <begin position="344"/>
        <end position="355"/>
    </location>
</feature>
<feature type="helix" evidence="41">
    <location>
        <begin position="360"/>
        <end position="366"/>
    </location>
</feature>
<feature type="strand" evidence="47">
    <location>
        <begin position="380"/>
        <end position="384"/>
    </location>
</feature>
<feature type="turn" evidence="41">
    <location>
        <begin position="390"/>
        <end position="392"/>
    </location>
</feature>
<feature type="turn" evidence="41">
    <location>
        <begin position="395"/>
        <end position="397"/>
    </location>
</feature>
<feature type="helix" evidence="41">
    <location>
        <begin position="403"/>
        <end position="405"/>
    </location>
</feature>
<feature type="strand" evidence="46">
    <location>
        <begin position="408"/>
        <end position="410"/>
    </location>
</feature>
<feature type="helix" evidence="41">
    <location>
        <begin position="411"/>
        <end position="413"/>
    </location>
</feature>
<feature type="turn" evidence="41">
    <location>
        <begin position="415"/>
        <end position="417"/>
    </location>
</feature>
<feature type="strand" evidence="41">
    <location>
        <begin position="421"/>
        <end position="423"/>
    </location>
</feature>
<feature type="turn" evidence="47">
    <location>
        <begin position="426"/>
        <end position="428"/>
    </location>
</feature>
<feature type="strand" evidence="47">
    <location>
        <begin position="433"/>
        <end position="437"/>
    </location>
</feature>
<feature type="strand" evidence="47">
    <location>
        <begin position="451"/>
        <end position="454"/>
    </location>
</feature>
<feature type="helix" evidence="47">
    <location>
        <begin position="455"/>
        <end position="457"/>
    </location>
</feature>
<feature type="helix" evidence="47">
    <location>
        <begin position="464"/>
        <end position="466"/>
    </location>
</feature>
<feature type="helix" evidence="47">
    <location>
        <begin position="470"/>
        <end position="472"/>
    </location>
</feature>
<feature type="strand" evidence="47">
    <location>
        <begin position="533"/>
        <end position="539"/>
    </location>
</feature>
<feature type="helix" evidence="47">
    <location>
        <begin position="542"/>
        <end position="548"/>
    </location>
</feature>
<feature type="strand" evidence="47">
    <location>
        <begin position="559"/>
        <end position="562"/>
    </location>
</feature>
<feature type="helix" evidence="47">
    <location>
        <begin position="564"/>
        <end position="569"/>
    </location>
</feature>
<feature type="strand" evidence="47">
    <location>
        <begin position="573"/>
        <end position="575"/>
    </location>
</feature>
<feature type="helix" evidence="47">
    <location>
        <begin position="579"/>
        <end position="586"/>
    </location>
</feature>
<feature type="helix" evidence="47">
    <location>
        <begin position="594"/>
        <end position="609"/>
    </location>
</feature>
<feature type="strand" evidence="47">
    <location>
        <begin position="620"/>
        <end position="624"/>
    </location>
</feature>
<feature type="helix" evidence="47">
    <location>
        <begin position="628"/>
        <end position="632"/>
    </location>
</feature>
<feature type="turn" evidence="47">
    <location>
        <begin position="638"/>
        <end position="641"/>
    </location>
</feature>
<feature type="helix" evidence="47">
    <location>
        <begin position="643"/>
        <end position="650"/>
    </location>
</feature>
<feature type="helix" evidence="47">
    <location>
        <begin position="652"/>
        <end position="655"/>
    </location>
</feature>
<feature type="helix" evidence="47">
    <location>
        <begin position="680"/>
        <end position="682"/>
    </location>
</feature>
<feature type="helix" evidence="47">
    <location>
        <begin position="684"/>
        <end position="711"/>
    </location>
</feature>
<feature type="helix" evidence="47">
    <location>
        <begin position="713"/>
        <end position="744"/>
    </location>
</feature>
<feature type="turn" evidence="47">
    <location>
        <begin position="748"/>
        <end position="753"/>
    </location>
</feature>
<feature type="helix" evidence="47">
    <location>
        <begin position="754"/>
        <end position="762"/>
    </location>
</feature>
<feature type="helix" evidence="47">
    <location>
        <begin position="764"/>
        <end position="789"/>
    </location>
</feature>
<feature type="helix" evidence="47">
    <location>
        <begin position="792"/>
        <end position="816"/>
    </location>
</feature>
<feature type="turn" evidence="47">
    <location>
        <begin position="817"/>
        <end position="821"/>
    </location>
</feature>
<feature type="helix" evidence="47">
    <location>
        <begin position="828"/>
        <end position="832"/>
    </location>
</feature>
<feature type="turn" evidence="47">
    <location>
        <begin position="833"/>
        <end position="836"/>
    </location>
</feature>
<feature type="strand" evidence="47">
    <location>
        <begin position="844"/>
        <end position="846"/>
    </location>
</feature>
<feature type="helix" evidence="47">
    <location>
        <begin position="847"/>
        <end position="849"/>
    </location>
</feature>
<feature type="helix" evidence="47">
    <location>
        <begin position="850"/>
        <end position="860"/>
    </location>
</feature>
<feature type="helix" evidence="43">
    <location>
        <begin position="864"/>
        <end position="867"/>
    </location>
</feature>
<feature type="strand" evidence="43">
    <location>
        <begin position="868"/>
        <end position="875"/>
    </location>
</feature>
<feature type="strand" evidence="43">
    <location>
        <begin position="878"/>
        <end position="881"/>
    </location>
</feature>
<feature type="strand" evidence="43">
    <location>
        <begin position="883"/>
        <end position="885"/>
    </location>
</feature>
<feature type="strand" evidence="43">
    <location>
        <begin position="888"/>
        <end position="891"/>
    </location>
</feature>
<feature type="strand" evidence="43">
    <location>
        <begin position="896"/>
        <end position="901"/>
    </location>
</feature>
<feature type="strand" evidence="43">
    <location>
        <begin position="904"/>
        <end position="907"/>
    </location>
</feature>
<feature type="strand" evidence="42">
    <location>
        <begin position="909"/>
        <end position="911"/>
    </location>
</feature>
<feature type="strand" evidence="43">
    <location>
        <begin position="914"/>
        <end position="917"/>
    </location>
</feature>
<feature type="strand" evidence="43">
    <location>
        <begin position="931"/>
        <end position="939"/>
    </location>
</feature>
<feature type="helix" evidence="43">
    <location>
        <begin position="941"/>
        <end position="944"/>
    </location>
</feature>
<feature type="strand" evidence="43">
    <location>
        <begin position="948"/>
        <end position="954"/>
    </location>
</feature>
<feature type="strand" evidence="43">
    <location>
        <begin position="957"/>
        <end position="959"/>
    </location>
</feature>
<feature type="strand" evidence="43">
    <location>
        <begin position="961"/>
        <end position="967"/>
    </location>
</feature>
<feature type="strand" evidence="43">
    <location>
        <begin position="970"/>
        <end position="976"/>
    </location>
</feature>
<feature type="strand" evidence="43">
    <location>
        <begin position="982"/>
        <end position="988"/>
    </location>
</feature>
<feature type="turn" evidence="43">
    <location>
        <begin position="991"/>
        <end position="993"/>
    </location>
</feature>
<feature type="strand" evidence="43">
    <location>
        <begin position="1003"/>
        <end position="1009"/>
    </location>
</feature>
<feature type="strand" evidence="43">
    <location>
        <begin position="1013"/>
        <end position="1019"/>
    </location>
</feature>
<feature type="strand" evidence="43">
    <location>
        <begin position="1022"/>
        <end position="1028"/>
    </location>
</feature>
<feature type="strand" evidence="43">
    <location>
        <begin position="1040"/>
        <end position="1044"/>
    </location>
</feature>
<feature type="strand" evidence="43">
    <location>
        <begin position="1055"/>
        <end position="1065"/>
    </location>
</feature>
<feature type="helix" evidence="43">
    <location>
        <begin position="1069"/>
        <end position="1079"/>
    </location>
</feature>
<feature type="turn" evidence="43">
    <location>
        <begin position="1080"/>
        <end position="1083"/>
    </location>
</feature>
<feature type="strand" evidence="43">
    <location>
        <begin position="1090"/>
        <end position="1092"/>
    </location>
</feature>
<feature type="strand" evidence="43">
    <location>
        <begin position="1098"/>
        <end position="1103"/>
    </location>
</feature>
<feature type="strand" evidence="43">
    <location>
        <begin position="1109"/>
        <end position="1114"/>
    </location>
</feature>
<feature type="strand" evidence="43">
    <location>
        <begin position="1117"/>
        <end position="1122"/>
    </location>
</feature>
<feature type="strand" evidence="43">
    <location>
        <begin position="1135"/>
        <end position="1139"/>
    </location>
</feature>
<feature type="strand" evidence="44">
    <location>
        <begin position="1150"/>
        <end position="1152"/>
    </location>
</feature>
<feature type="strand" evidence="43">
    <location>
        <begin position="1154"/>
        <end position="1161"/>
    </location>
</feature>
<feature type="strand" evidence="43">
    <location>
        <begin position="1164"/>
        <end position="1170"/>
    </location>
</feature>
<feature type="strand" evidence="43">
    <location>
        <begin position="1188"/>
        <end position="1196"/>
    </location>
</feature>
<feature type="helix" evidence="43">
    <location>
        <begin position="1201"/>
        <end position="1203"/>
    </location>
</feature>
<feature type="strand" evidence="43">
    <location>
        <begin position="1204"/>
        <end position="1209"/>
    </location>
</feature>
<feature type="strand" evidence="43">
    <location>
        <begin position="1218"/>
        <end position="1222"/>
    </location>
</feature>
<feature type="strand" evidence="43">
    <location>
        <begin position="1224"/>
        <end position="1226"/>
    </location>
</feature>
<feature type="strand" evidence="43">
    <location>
        <begin position="1228"/>
        <end position="1235"/>
    </location>
</feature>
<feature type="turn" evidence="45">
    <location>
        <begin position="1239"/>
        <end position="1242"/>
    </location>
</feature>
<feature type="strand" evidence="43">
    <location>
        <begin position="1245"/>
        <end position="1253"/>
    </location>
</feature>
<feature type="helix" evidence="43">
    <location>
        <begin position="1255"/>
        <end position="1257"/>
    </location>
</feature>
<feature type="helix" evidence="43">
    <location>
        <begin position="1261"/>
        <end position="1263"/>
    </location>
</feature>
<feature type="strand" evidence="43">
    <location>
        <begin position="1265"/>
        <end position="1268"/>
    </location>
</feature>
<organism>
    <name type="scientific">Clostridium botulinum D phage</name>
    <name type="common">Clostridium botulinum D bacteriophage</name>
    <dbReference type="NCBI Taxonomy" id="29342"/>
    <lineage>
        <taxon>Viruses</taxon>
        <taxon>Duplodnaviria</taxon>
        <taxon>Heunggongvirae</taxon>
        <taxon>Uroviricota</taxon>
        <taxon>Caudoviricetes</taxon>
    </lineage>
</organism>